<name>SPEA_SALA4</name>
<comment type="function">
    <text evidence="1">Catalyzes the biosynthesis of agmatine from arginine.</text>
</comment>
<comment type="catalytic activity">
    <reaction evidence="1">
        <text>L-arginine + H(+) = agmatine + CO2</text>
        <dbReference type="Rhea" id="RHEA:17641"/>
        <dbReference type="ChEBI" id="CHEBI:15378"/>
        <dbReference type="ChEBI" id="CHEBI:16526"/>
        <dbReference type="ChEBI" id="CHEBI:32682"/>
        <dbReference type="ChEBI" id="CHEBI:58145"/>
        <dbReference type="EC" id="4.1.1.19"/>
    </reaction>
</comment>
<comment type="cofactor">
    <cofactor evidence="1">
        <name>Mg(2+)</name>
        <dbReference type="ChEBI" id="CHEBI:18420"/>
    </cofactor>
</comment>
<comment type="cofactor">
    <cofactor evidence="1">
        <name>pyridoxal 5'-phosphate</name>
        <dbReference type="ChEBI" id="CHEBI:597326"/>
    </cofactor>
</comment>
<comment type="pathway">
    <text evidence="1">Amine and polyamine biosynthesis; agmatine biosynthesis; agmatine from L-arginine: step 1/1.</text>
</comment>
<comment type="similarity">
    <text evidence="1">Belongs to the Orn/Lys/Arg decarboxylase class-II family. SpeA subfamily.</text>
</comment>
<sequence length="632" mass="71163">MSSQEASKMLRTYNIAWWGNNYYDVNELGHISVCPDPDVPEARVDLAKLVKAREAQGQRLPALFCFPQILQHRLRSINAAFKRARESYGYNGDYFLVYPIKVNQHRRVIESLIHSGEPLGLEAGSKAELMAVLAHAGMTRSVIVCNGYKDREYIRLALIGEKMGHKVYLVIEKMSEIAIVLEEAERLNVVPRLGVRARLASQGSGKWQSSGGEKSKFGLAATQVLQLVETLRDAGRLDSLQLLHFHLGSQMANIRDIATGVRESARFYVELHKLGVNIQCFDVGGGLGVDYEGTRSQSDCSVNYGLNEYANNIIWAIGDACEEHGLPHPTVITESGRAVTAHHTVLVSNIIGVERNEYTDPTAPAEDAPRALQNLWETWQEMHKPGTRRSLREWLHDSQMDLHDIHIGYSSGAFSLQERAWAEQLYLSMCHEVQKQLDPQNRAHRPIIDELQERMADKMYVNFSLFQSMPDAWGIDQLFPVLPLEGLDQVPERRAVLLDITCDSDGAIDHYIDGDGIATTMPMPEYDPENPPMLGFFMVGAYQEILGNMHNLFGDTEAVDVFVFPDGSVEVELSDEGDTVADMLQYVQLDPKTLLTHFRDQVKQTDLDDALQQQFLEEFEAGLYGYTYLEDE</sequence>
<protein>
    <recommendedName>
        <fullName evidence="1">Biosynthetic arginine decarboxylase</fullName>
        <shortName evidence="1">ADC</shortName>
        <ecNumber evidence="1">4.1.1.19</ecNumber>
    </recommendedName>
</protein>
<gene>
    <name evidence="1" type="primary">speA</name>
    <name type="ordered locus">SeAg_B3249</name>
</gene>
<organism>
    <name type="scientific">Salmonella agona (strain SL483)</name>
    <dbReference type="NCBI Taxonomy" id="454166"/>
    <lineage>
        <taxon>Bacteria</taxon>
        <taxon>Pseudomonadati</taxon>
        <taxon>Pseudomonadota</taxon>
        <taxon>Gammaproteobacteria</taxon>
        <taxon>Enterobacterales</taxon>
        <taxon>Enterobacteriaceae</taxon>
        <taxon>Salmonella</taxon>
    </lineage>
</organism>
<feature type="chain" id="PRO_1000145598" description="Biosynthetic arginine decarboxylase">
    <location>
        <begin position="1"/>
        <end position="632"/>
    </location>
</feature>
<feature type="binding site" evidence="1">
    <location>
        <begin position="281"/>
        <end position="291"/>
    </location>
    <ligand>
        <name>substrate</name>
    </ligand>
</feature>
<feature type="modified residue" description="N6-(pyridoxal phosphate)lysine" evidence="1">
    <location>
        <position position="101"/>
    </location>
</feature>
<accession>B5F5L1</accession>
<reference key="1">
    <citation type="journal article" date="2011" name="J. Bacteriol.">
        <title>Comparative genomics of 28 Salmonella enterica isolates: evidence for CRISPR-mediated adaptive sublineage evolution.</title>
        <authorList>
            <person name="Fricke W.F."/>
            <person name="Mammel M.K."/>
            <person name="McDermott P.F."/>
            <person name="Tartera C."/>
            <person name="White D.G."/>
            <person name="Leclerc J.E."/>
            <person name="Ravel J."/>
            <person name="Cebula T.A."/>
        </authorList>
    </citation>
    <scope>NUCLEOTIDE SEQUENCE [LARGE SCALE GENOMIC DNA]</scope>
    <source>
        <strain>SL483</strain>
    </source>
</reference>
<dbReference type="EC" id="4.1.1.19" evidence="1"/>
<dbReference type="EMBL" id="CP001138">
    <property type="protein sequence ID" value="ACH51462.1"/>
    <property type="molecule type" value="Genomic_DNA"/>
</dbReference>
<dbReference type="SMR" id="B5F5L1"/>
<dbReference type="KEGG" id="sea:SeAg_B3249"/>
<dbReference type="HOGENOM" id="CLU_027243_1_0_6"/>
<dbReference type="UniPathway" id="UPA00186">
    <property type="reaction ID" value="UER00284"/>
</dbReference>
<dbReference type="Proteomes" id="UP000008819">
    <property type="component" value="Chromosome"/>
</dbReference>
<dbReference type="GO" id="GO:0008792">
    <property type="term" value="F:arginine decarboxylase activity"/>
    <property type="evidence" value="ECO:0007669"/>
    <property type="project" value="UniProtKB-UniRule"/>
</dbReference>
<dbReference type="GO" id="GO:0046872">
    <property type="term" value="F:metal ion binding"/>
    <property type="evidence" value="ECO:0007669"/>
    <property type="project" value="UniProtKB-KW"/>
</dbReference>
<dbReference type="GO" id="GO:0006527">
    <property type="term" value="P:arginine catabolic process"/>
    <property type="evidence" value="ECO:0007669"/>
    <property type="project" value="InterPro"/>
</dbReference>
<dbReference type="GO" id="GO:0033388">
    <property type="term" value="P:putrescine biosynthetic process from arginine"/>
    <property type="evidence" value="ECO:0007669"/>
    <property type="project" value="TreeGrafter"/>
</dbReference>
<dbReference type="GO" id="GO:0008295">
    <property type="term" value="P:spermidine biosynthetic process"/>
    <property type="evidence" value="ECO:0007669"/>
    <property type="project" value="UniProtKB-UniRule"/>
</dbReference>
<dbReference type="CDD" id="cd06830">
    <property type="entry name" value="PLPDE_III_ADC"/>
    <property type="match status" value="1"/>
</dbReference>
<dbReference type="FunFam" id="1.10.287.3440:FF:000001">
    <property type="entry name" value="Biosynthetic arginine decarboxylase"/>
    <property type="match status" value="1"/>
</dbReference>
<dbReference type="FunFam" id="1.20.58.930:FF:000001">
    <property type="entry name" value="Biosynthetic arginine decarboxylase"/>
    <property type="match status" value="1"/>
</dbReference>
<dbReference type="FunFam" id="2.40.37.10:FF:000001">
    <property type="entry name" value="Biosynthetic arginine decarboxylase"/>
    <property type="match status" value="1"/>
</dbReference>
<dbReference type="FunFam" id="3.20.20.10:FF:000001">
    <property type="entry name" value="Biosynthetic arginine decarboxylase"/>
    <property type="match status" value="1"/>
</dbReference>
<dbReference type="Gene3D" id="1.10.287.3440">
    <property type="match status" value="1"/>
</dbReference>
<dbReference type="Gene3D" id="1.20.58.930">
    <property type="match status" value="1"/>
</dbReference>
<dbReference type="Gene3D" id="3.20.20.10">
    <property type="entry name" value="Alanine racemase"/>
    <property type="match status" value="1"/>
</dbReference>
<dbReference type="Gene3D" id="2.40.37.10">
    <property type="entry name" value="Lyase, Ornithine Decarboxylase, Chain A, domain 1"/>
    <property type="match status" value="1"/>
</dbReference>
<dbReference type="HAMAP" id="MF_01417">
    <property type="entry name" value="SpeA"/>
    <property type="match status" value="1"/>
</dbReference>
<dbReference type="InterPro" id="IPR009006">
    <property type="entry name" value="Ala_racemase/Decarboxylase_C"/>
</dbReference>
<dbReference type="InterPro" id="IPR040634">
    <property type="entry name" value="Arg_decarb_HB"/>
</dbReference>
<dbReference type="InterPro" id="IPR041128">
    <property type="entry name" value="Arg_decarbox_C"/>
</dbReference>
<dbReference type="InterPro" id="IPR002985">
    <property type="entry name" value="Arg_decrbxlase"/>
</dbReference>
<dbReference type="InterPro" id="IPR022657">
    <property type="entry name" value="De-COase2_CS"/>
</dbReference>
<dbReference type="InterPro" id="IPR022644">
    <property type="entry name" value="De-COase2_N"/>
</dbReference>
<dbReference type="InterPro" id="IPR022653">
    <property type="entry name" value="De-COase2_pyr-phos_BS"/>
</dbReference>
<dbReference type="InterPro" id="IPR000183">
    <property type="entry name" value="Orn/DAP/Arg_de-COase"/>
</dbReference>
<dbReference type="InterPro" id="IPR029066">
    <property type="entry name" value="PLP-binding_barrel"/>
</dbReference>
<dbReference type="NCBIfam" id="NF003763">
    <property type="entry name" value="PRK05354.1"/>
    <property type="match status" value="1"/>
</dbReference>
<dbReference type="NCBIfam" id="TIGR01273">
    <property type="entry name" value="speA"/>
    <property type="match status" value="1"/>
</dbReference>
<dbReference type="PANTHER" id="PTHR43295">
    <property type="entry name" value="ARGININE DECARBOXYLASE"/>
    <property type="match status" value="1"/>
</dbReference>
<dbReference type="PANTHER" id="PTHR43295:SF9">
    <property type="entry name" value="BIOSYNTHETIC ARGININE DECARBOXYLASE"/>
    <property type="match status" value="1"/>
</dbReference>
<dbReference type="Pfam" id="PF17810">
    <property type="entry name" value="Arg_decarb_HB"/>
    <property type="match status" value="1"/>
</dbReference>
<dbReference type="Pfam" id="PF17944">
    <property type="entry name" value="Arg_decarbox_C"/>
    <property type="match status" value="1"/>
</dbReference>
<dbReference type="Pfam" id="PF02784">
    <property type="entry name" value="Orn_Arg_deC_N"/>
    <property type="match status" value="1"/>
</dbReference>
<dbReference type="PIRSF" id="PIRSF001336">
    <property type="entry name" value="Arg_decrbxlase"/>
    <property type="match status" value="1"/>
</dbReference>
<dbReference type="PRINTS" id="PR01180">
    <property type="entry name" value="ARGDCRBXLASE"/>
</dbReference>
<dbReference type="PRINTS" id="PR01179">
    <property type="entry name" value="ODADCRBXLASE"/>
</dbReference>
<dbReference type="SUPFAM" id="SSF50621">
    <property type="entry name" value="Alanine racemase C-terminal domain-like"/>
    <property type="match status" value="1"/>
</dbReference>
<dbReference type="SUPFAM" id="SSF51419">
    <property type="entry name" value="PLP-binding barrel"/>
    <property type="match status" value="1"/>
</dbReference>
<dbReference type="PROSITE" id="PS00878">
    <property type="entry name" value="ODR_DC_2_1"/>
    <property type="match status" value="1"/>
</dbReference>
<dbReference type="PROSITE" id="PS00879">
    <property type="entry name" value="ODR_DC_2_2"/>
    <property type="match status" value="1"/>
</dbReference>
<keyword id="KW-0210">Decarboxylase</keyword>
<keyword id="KW-0456">Lyase</keyword>
<keyword id="KW-0460">Magnesium</keyword>
<keyword id="KW-0479">Metal-binding</keyword>
<keyword id="KW-0620">Polyamine biosynthesis</keyword>
<keyword id="KW-0661">Putrescine biosynthesis</keyword>
<keyword id="KW-0663">Pyridoxal phosphate</keyword>
<keyword id="KW-0745">Spermidine biosynthesis</keyword>
<proteinExistence type="inferred from homology"/>
<evidence type="ECO:0000255" key="1">
    <source>
        <dbReference type="HAMAP-Rule" id="MF_01417"/>
    </source>
</evidence>